<reference key="1">
    <citation type="journal article" date="1998" name="Nature">
        <title>Deciphering the biology of Mycobacterium tuberculosis from the complete genome sequence.</title>
        <authorList>
            <person name="Cole S.T."/>
            <person name="Brosch R."/>
            <person name="Parkhill J."/>
            <person name="Garnier T."/>
            <person name="Churcher C.M."/>
            <person name="Harris D.E."/>
            <person name="Gordon S.V."/>
            <person name="Eiglmeier K."/>
            <person name="Gas S."/>
            <person name="Barry C.E. III"/>
            <person name="Tekaia F."/>
            <person name="Badcock K."/>
            <person name="Basham D."/>
            <person name="Brown D."/>
            <person name="Chillingworth T."/>
            <person name="Connor R."/>
            <person name="Davies R.M."/>
            <person name="Devlin K."/>
            <person name="Feltwell T."/>
            <person name="Gentles S."/>
            <person name="Hamlin N."/>
            <person name="Holroyd S."/>
            <person name="Hornsby T."/>
            <person name="Jagels K."/>
            <person name="Krogh A."/>
            <person name="McLean J."/>
            <person name="Moule S."/>
            <person name="Murphy L.D."/>
            <person name="Oliver S."/>
            <person name="Osborne J."/>
            <person name="Quail M.A."/>
            <person name="Rajandream M.A."/>
            <person name="Rogers J."/>
            <person name="Rutter S."/>
            <person name="Seeger K."/>
            <person name="Skelton S."/>
            <person name="Squares S."/>
            <person name="Squares R."/>
            <person name="Sulston J.E."/>
            <person name="Taylor K."/>
            <person name="Whitehead S."/>
            <person name="Barrell B.G."/>
        </authorList>
    </citation>
    <scope>NUCLEOTIDE SEQUENCE [LARGE SCALE GENOMIC DNA]</scope>
    <source>
        <strain>ATCC 25618 / H37Rv</strain>
    </source>
</reference>
<reference key="2">
    <citation type="journal article" date="2022" name="Genomics">
        <title>Deep N-terminomics of Mycobacterium tuberculosis H37Rv extensively correct annotated encoding genes.</title>
        <authorList>
            <person name="Shi J."/>
            <person name="Meng S."/>
            <person name="Wan L."/>
            <person name="Zhang Z."/>
            <person name="Jiang S."/>
            <person name="Zhu H."/>
            <person name="Dai E."/>
            <person name="Chang L."/>
            <person name="Gao H."/>
            <person name="Wan K."/>
            <person name="Zhang L."/>
            <person name="Zhao X."/>
            <person name="Liu H."/>
            <person name="Lyu Z."/>
            <person name="Zhang Y."/>
            <person name="Xu P."/>
        </authorList>
    </citation>
    <scope>PROTEIN SEQUENCE OF 12-29</scope>
    <scope>SEQUENCE REVISION TO N-TERMINUS</scope>
    <source>
        <strain>H37Rv</strain>
    </source>
</reference>
<reference key="3">
    <citation type="journal article" date="2011" name="Mol. Cell. Proteomics">
        <title>Proteogenomic analysis of Mycobacterium tuberculosis by high resolution mass spectrometry.</title>
        <authorList>
            <person name="Kelkar D.S."/>
            <person name="Kumar D."/>
            <person name="Kumar P."/>
            <person name="Balakrishnan L."/>
            <person name="Muthusamy B."/>
            <person name="Yadav A.K."/>
            <person name="Shrivastava P."/>
            <person name="Marimuthu A."/>
            <person name="Anand S."/>
            <person name="Sundaram H."/>
            <person name="Kingsbury R."/>
            <person name="Harsha H.C."/>
            <person name="Nair B."/>
            <person name="Prasad T.S."/>
            <person name="Chauhan D.S."/>
            <person name="Katoch K."/>
            <person name="Katoch V.M."/>
            <person name="Kumar P."/>
            <person name="Chaerkady R."/>
            <person name="Ramachandran S."/>
            <person name="Dash D."/>
            <person name="Pandey A."/>
        </authorList>
    </citation>
    <scope>IDENTIFICATION BY MASS SPECTROMETRY [LARGE SCALE ANALYSIS]</scope>
    <source>
        <strain>ATCC 25618 / H37Rv</strain>
    </source>
</reference>
<comment type="sequence caution" evidence="1">
    <conflict type="erroneous initiation">
        <sequence resource="EMBL-CDS" id="CCP44126"/>
    </conflict>
    <text>Truncated N-terminus.</text>
</comment>
<proteinExistence type="evidence at protein level"/>
<sequence length="401" mass="43742">MNLDGNQASIREVCDAGLLSGAVTMVWQREKLLQVNEIGYRDIDAGVPMQRDTLFRIASMTKPVTVAAAMSLVDEGKLALRDPITRWAPELCKVAVLDDAAGPLDRTHPARRAILIEDLLTHTSGLAYGFSVSGPISRAYQRLPFGQGPDVWLAALATLPLVHQPGDRVTYSHAIDVLGVIVSRIEDAPLYQIIDERVLGPAGMTDTGFYVSADAQRRAATMYRLDEQDRLRHDVMGPPHVTPPSFCNAGGGLWSTADDYLRFVRMLLGDGTVDGVRVLSPESVRLMRTDRLTDEQKRHSFLGAPFWVGRGFGLNLSVVTDPAKSRPLFGPGGLGTFSWPGAYGTWWQADPSADLILLYLIQHCPDLSVDAAAAVAGNPSLAKLRTAQPKFVRRTYRALGL</sequence>
<organism>
    <name type="scientific">Mycobacterium tuberculosis (strain ATCC 25618 / H37Rv)</name>
    <dbReference type="NCBI Taxonomy" id="83332"/>
    <lineage>
        <taxon>Bacteria</taxon>
        <taxon>Bacillati</taxon>
        <taxon>Actinomycetota</taxon>
        <taxon>Actinomycetes</taxon>
        <taxon>Mycobacteriales</taxon>
        <taxon>Mycobacteriaceae</taxon>
        <taxon>Mycobacterium</taxon>
        <taxon>Mycobacterium tuberculosis complex</taxon>
    </lineage>
</organism>
<gene>
    <name type="ordered locus">Rv1367c</name>
    <name type="ORF">MTCY02B10.31c</name>
    <name type="ORF">MTCY02B12.01c</name>
</gene>
<accession>P9WLZ3</accession>
<accession>L0T6F7</accession>
<accession>Q11037</accession>
<evidence type="ECO:0000269" key="1">
    <source>
    </source>
</evidence>
<keyword id="KW-0903">Direct protein sequencing</keyword>
<keyword id="KW-1185">Reference proteome</keyword>
<dbReference type="EMBL" id="AL123456">
    <property type="protein sequence ID" value="CCP44126.1"/>
    <property type="status" value="ALT_INIT"/>
    <property type="molecule type" value="Genomic_DNA"/>
</dbReference>
<dbReference type="PIR" id="D70957">
    <property type="entry name" value="D70957"/>
</dbReference>
<dbReference type="RefSeq" id="NP_215883.1">
    <property type="nucleotide sequence ID" value="NC_000962.3"/>
</dbReference>
<dbReference type="RefSeq" id="WP_003898846.1">
    <property type="nucleotide sequence ID" value="NZ_NVQJ01000031.1"/>
</dbReference>
<dbReference type="RefSeq" id="WP_010886113.1">
    <property type="nucleotide sequence ID" value="NC_000962.3"/>
</dbReference>
<dbReference type="SMR" id="P9WLZ3"/>
<dbReference type="STRING" id="83332.Rv1367c"/>
<dbReference type="MEROPS" id="S12.950"/>
<dbReference type="PaxDb" id="83332-Rv1367c"/>
<dbReference type="DNASU" id="886793"/>
<dbReference type="GeneID" id="886793"/>
<dbReference type="KEGG" id="mtu:Rv1367c"/>
<dbReference type="PATRIC" id="fig|83332.12.peg.1532"/>
<dbReference type="TubercuList" id="Rv1367c"/>
<dbReference type="eggNOG" id="COG1680">
    <property type="taxonomic scope" value="Bacteria"/>
</dbReference>
<dbReference type="InParanoid" id="P9WLZ3"/>
<dbReference type="OrthoDB" id="4281716at2"/>
<dbReference type="Proteomes" id="UP000001584">
    <property type="component" value="Chromosome"/>
</dbReference>
<dbReference type="GO" id="GO:0005886">
    <property type="term" value="C:plasma membrane"/>
    <property type="evidence" value="ECO:0007005"/>
    <property type="project" value="MTBBASE"/>
</dbReference>
<dbReference type="Gene3D" id="3.40.710.10">
    <property type="entry name" value="DD-peptidase/beta-lactamase superfamily"/>
    <property type="match status" value="1"/>
</dbReference>
<dbReference type="InterPro" id="IPR001466">
    <property type="entry name" value="Beta-lactam-related"/>
</dbReference>
<dbReference type="InterPro" id="IPR012338">
    <property type="entry name" value="Beta-lactam/transpept-like"/>
</dbReference>
<dbReference type="InterPro" id="IPR050789">
    <property type="entry name" value="Diverse_Enzym_Activities"/>
</dbReference>
<dbReference type="PANTHER" id="PTHR43283:SF3">
    <property type="entry name" value="BETA-LACTAMASE FAMILY PROTEIN (AFU_ORTHOLOGUE AFUA_5G07500)"/>
    <property type="match status" value="1"/>
</dbReference>
<dbReference type="PANTHER" id="PTHR43283">
    <property type="entry name" value="BETA-LACTAMASE-RELATED"/>
    <property type="match status" value="1"/>
</dbReference>
<dbReference type="Pfam" id="PF00144">
    <property type="entry name" value="Beta-lactamase"/>
    <property type="match status" value="1"/>
</dbReference>
<dbReference type="SUPFAM" id="SSF56601">
    <property type="entry name" value="beta-lactamase/transpeptidase-like"/>
    <property type="match status" value="1"/>
</dbReference>
<feature type="chain" id="PRO_0000103836" description="Protein Rv1367c">
    <location>
        <begin position="1"/>
        <end position="401"/>
    </location>
</feature>
<name>Y1367_MYCTU</name>
<protein>
    <recommendedName>
        <fullName>Protein Rv1367c</fullName>
    </recommendedName>
</protein>